<proteinExistence type="evidence at protein level"/>
<dbReference type="EC" id="3.6.4.-"/>
<dbReference type="EMBL" id="AF317129">
    <property type="protein sequence ID" value="AAG50271.1"/>
    <property type="molecule type" value="mRNA"/>
</dbReference>
<dbReference type="EMBL" id="AL158207">
    <property type="status" value="NOT_ANNOTATED_CDS"/>
    <property type="molecule type" value="Genomic_DNA"/>
</dbReference>
<dbReference type="EMBL" id="BC015578">
    <property type="protein sequence ID" value="AAH15578.1"/>
    <property type="molecule type" value="mRNA"/>
</dbReference>
<dbReference type="EMBL" id="AF007872">
    <property type="protein sequence ID" value="AAC51733.1"/>
    <property type="molecule type" value="mRNA"/>
</dbReference>
<dbReference type="CCDS" id="CCDS6929.1"/>
<dbReference type="RefSeq" id="NP_001304822.1">
    <property type="nucleotide sequence ID" value="NM_001317893.1"/>
</dbReference>
<dbReference type="RefSeq" id="NP_001304823.1">
    <property type="nucleotide sequence ID" value="NM_001317894.1"/>
</dbReference>
<dbReference type="RefSeq" id="NP_055321.1">
    <property type="nucleotide sequence ID" value="NM_014506.3"/>
</dbReference>
<dbReference type="SMR" id="O14657"/>
<dbReference type="BioGRID" id="118160">
    <property type="interactions" value="107"/>
</dbReference>
<dbReference type="CORUM" id="O14657"/>
<dbReference type="DIP" id="DIP-56930N"/>
<dbReference type="FunCoup" id="O14657">
    <property type="interactions" value="2305"/>
</dbReference>
<dbReference type="IntAct" id="O14657">
    <property type="interactions" value="54"/>
</dbReference>
<dbReference type="MINT" id="O14657"/>
<dbReference type="STRING" id="9606.ENSP00000259339"/>
<dbReference type="GlyConnect" id="1824">
    <property type="glycosylation" value="4 N-Linked glycans (1 site)"/>
</dbReference>
<dbReference type="GlyCosmos" id="O14657">
    <property type="glycosylation" value="2 sites, 4 glycans"/>
</dbReference>
<dbReference type="GlyGen" id="O14657">
    <property type="glycosylation" value="5 sites, 8 N-linked glycans (1 site), 1 O-linked glycan (3 sites)"/>
</dbReference>
<dbReference type="iPTMnet" id="O14657"/>
<dbReference type="PhosphoSitePlus" id="O14657"/>
<dbReference type="SwissPalm" id="O14657"/>
<dbReference type="BioMuta" id="TOR1B"/>
<dbReference type="jPOST" id="O14657"/>
<dbReference type="MassIVE" id="O14657"/>
<dbReference type="PaxDb" id="9606-ENSP00000259339"/>
<dbReference type="PeptideAtlas" id="O14657"/>
<dbReference type="ProteomicsDB" id="48154"/>
<dbReference type="Pumba" id="O14657"/>
<dbReference type="Antibodypedia" id="17905">
    <property type="antibodies" value="178 antibodies from 20 providers"/>
</dbReference>
<dbReference type="DNASU" id="27348"/>
<dbReference type="Ensembl" id="ENST00000259339.7">
    <property type="protein sequence ID" value="ENSP00000259339.2"/>
    <property type="gene ID" value="ENSG00000136816.16"/>
</dbReference>
<dbReference type="GeneID" id="27348"/>
<dbReference type="KEGG" id="hsa:27348"/>
<dbReference type="MANE-Select" id="ENST00000259339.7">
    <property type="protein sequence ID" value="ENSP00000259339.2"/>
    <property type="RefSeq nucleotide sequence ID" value="NM_014506.3"/>
    <property type="RefSeq protein sequence ID" value="NP_055321.1"/>
</dbReference>
<dbReference type="UCSC" id="uc004byk.1">
    <property type="organism name" value="human"/>
</dbReference>
<dbReference type="AGR" id="HGNC:11995"/>
<dbReference type="CTD" id="27348"/>
<dbReference type="DisGeNET" id="27348"/>
<dbReference type="GeneCards" id="TOR1B"/>
<dbReference type="HGNC" id="HGNC:11995">
    <property type="gene designation" value="TOR1B"/>
</dbReference>
<dbReference type="HPA" id="ENSG00000136816">
    <property type="expression patterns" value="Low tissue specificity"/>
</dbReference>
<dbReference type="MIM" id="608050">
    <property type="type" value="gene"/>
</dbReference>
<dbReference type="neXtProt" id="NX_O14657"/>
<dbReference type="OpenTargets" id="ENSG00000136816"/>
<dbReference type="PharmGKB" id="PA36676"/>
<dbReference type="VEuPathDB" id="HostDB:ENSG00000136816"/>
<dbReference type="eggNOG" id="KOG2170">
    <property type="taxonomic scope" value="Eukaryota"/>
</dbReference>
<dbReference type="GeneTree" id="ENSGT00950000182888"/>
<dbReference type="HOGENOM" id="CLU_053537_0_0_1"/>
<dbReference type="InParanoid" id="O14657"/>
<dbReference type="OMA" id="ECCDDRS"/>
<dbReference type="OrthoDB" id="19623at2759"/>
<dbReference type="PAN-GO" id="O14657">
    <property type="GO annotations" value="5 GO annotations based on evolutionary models"/>
</dbReference>
<dbReference type="PhylomeDB" id="O14657"/>
<dbReference type="TreeFam" id="TF314941"/>
<dbReference type="PathwayCommons" id="O14657"/>
<dbReference type="Reactome" id="R-HSA-8856825">
    <property type="pathway name" value="Cargo recognition for clathrin-mediated endocytosis"/>
</dbReference>
<dbReference type="SignaLink" id="O14657"/>
<dbReference type="BioGRID-ORCS" id="27348">
    <property type="hits" value="13 hits in 1163 CRISPR screens"/>
</dbReference>
<dbReference type="ChiTaRS" id="TOR1B">
    <property type="organism name" value="human"/>
</dbReference>
<dbReference type="GenomeRNAi" id="27348"/>
<dbReference type="Pharos" id="O14657">
    <property type="development level" value="Tbio"/>
</dbReference>
<dbReference type="PRO" id="PR:O14657"/>
<dbReference type="Proteomes" id="UP000005640">
    <property type="component" value="Chromosome 9"/>
</dbReference>
<dbReference type="RNAct" id="O14657">
    <property type="molecule type" value="protein"/>
</dbReference>
<dbReference type="Bgee" id="ENSG00000136816">
    <property type="expression patterns" value="Expressed in mucosa of sigmoid colon and 193 other cell types or tissues"/>
</dbReference>
<dbReference type="ExpressionAtlas" id="O14657">
    <property type="expression patterns" value="baseline and differential"/>
</dbReference>
<dbReference type="GO" id="GO:0005783">
    <property type="term" value="C:endoplasmic reticulum"/>
    <property type="evidence" value="ECO:0000314"/>
    <property type="project" value="UniProtKB"/>
</dbReference>
<dbReference type="GO" id="GO:0005788">
    <property type="term" value="C:endoplasmic reticulum lumen"/>
    <property type="evidence" value="ECO:0000314"/>
    <property type="project" value="MGI"/>
</dbReference>
<dbReference type="GO" id="GO:0070062">
    <property type="term" value="C:extracellular exosome"/>
    <property type="evidence" value="ECO:0007005"/>
    <property type="project" value="UniProtKB"/>
</dbReference>
<dbReference type="GO" id="GO:0005635">
    <property type="term" value="C:nuclear envelope"/>
    <property type="evidence" value="ECO:0000314"/>
    <property type="project" value="UniProtKB"/>
</dbReference>
<dbReference type="GO" id="GO:0031965">
    <property type="term" value="C:nuclear membrane"/>
    <property type="evidence" value="ECO:0007669"/>
    <property type="project" value="UniProtKB-SubCell"/>
</dbReference>
<dbReference type="GO" id="GO:0005524">
    <property type="term" value="F:ATP binding"/>
    <property type="evidence" value="ECO:0007669"/>
    <property type="project" value="UniProtKB-KW"/>
</dbReference>
<dbReference type="GO" id="GO:0016887">
    <property type="term" value="F:ATP hydrolysis activity"/>
    <property type="evidence" value="ECO:0000314"/>
    <property type="project" value="UniProtKB"/>
</dbReference>
<dbReference type="GO" id="GO:0042802">
    <property type="term" value="F:identical protein binding"/>
    <property type="evidence" value="ECO:0000353"/>
    <property type="project" value="MGI"/>
</dbReference>
<dbReference type="GO" id="GO:0019894">
    <property type="term" value="F:kinesin binding"/>
    <property type="evidence" value="ECO:0000318"/>
    <property type="project" value="GO_Central"/>
</dbReference>
<dbReference type="GO" id="GO:0051085">
    <property type="term" value="P:chaperone cofactor-dependent protein refolding"/>
    <property type="evidence" value="ECO:0007669"/>
    <property type="project" value="InterPro"/>
</dbReference>
<dbReference type="GO" id="GO:0007029">
    <property type="term" value="P:endoplasmic reticulum organization"/>
    <property type="evidence" value="ECO:0000314"/>
    <property type="project" value="UniProtKB"/>
</dbReference>
<dbReference type="GO" id="GO:0071763">
    <property type="term" value="P:nuclear membrane organization"/>
    <property type="evidence" value="ECO:0000318"/>
    <property type="project" value="GO_Central"/>
</dbReference>
<dbReference type="GO" id="GO:0034504">
    <property type="term" value="P:protein localization to nucleus"/>
    <property type="evidence" value="ECO:0000318"/>
    <property type="project" value="GO_Central"/>
</dbReference>
<dbReference type="GO" id="GO:0006986">
    <property type="term" value="P:response to unfolded protein"/>
    <property type="evidence" value="ECO:0000304"/>
    <property type="project" value="ProtInc"/>
</dbReference>
<dbReference type="FunFam" id="3.40.50.300:FF:000743">
    <property type="entry name" value="Torsin"/>
    <property type="match status" value="1"/>
</dbReference>
<dbReference type="Gene3D" id="3.40.50.300">
    <property type="entry name" value="P-loop containing nucleotide triphosphate hydrolases"/>
    <property type="match status" value="1"/>
</dbReference>
<dbReference type="InterPro" id="IPR027417">
    <property type="entry name" value="P-loop_NTPase"/>
</dbReference>
<dbReference type="InterPro" id="IPR049337">
    <property type="entry name" value="TOR1A_C"/>
</dbReference>
<dbReference type="InterPro" id="IPR010448">
    <property type="entry name" value="Torsin"/>
</dbReference>
<dbReference type="InterPro" id="IPR017378">
    <property type="entry name" value="Torsin_1/2"/>
</dbReference>
<dbReference type="PANTHER" id="PTHR10760">
    <property type="entry name" value="TORSIN"/>
    <property type="match status" value="1"/>
</dbReference>
<dbReference type="PANTHER" id="PTHR10760:SF14">
    <property type="entry name" value="TORSIN-1B"/>
    <property type="match status" value="1"/>
</dbReference>
<dbReference type="Pfam" id="PF21376">
    <property type="entry name" value="TOR1A_C"/>
    <property type="match status" value="1"/>
</dbReference>
<dbReference type="Pfam" id="PF06309">
    <property type="entry name" value="Torsin"/>
    <property type="match status" value="1"/>
</dbReference>
<dbReference type="PIRSF" id="PIRSF038079">
    <property type="entry name" value="Torsin_2A"/>
    <property type="match status" value="1"/>
</dbReference>
<dbReference type="SUPFAM" id="SSF52540">
    <property type="entry name" value="P-loop containing nucleoside triphosphate hydrolases"/>
    <property type="match status" value="1"/>
</dbReference>
<comment type="function">
    <text evidence="5 6">May serve as a molecular chaperone assisting in the proper folding of secreted and/or membrane proteins. Plays a role in non-neural cells nuclear envelope and endoplasmic reticulum integrity. May have a redundant function with TOR1A in non-neural tissues.</text>
</comment>
<comment type="catalytic activity">
    <reaction evidence="5 6">
        <text>ATP + H2O = ADP + phosphate + H(+)</text>
        <dbReference type="Rhea" id="RHEA:13065"/>
        <dbReference type="ChEBI" id="CHEBI:15377"/>
        <dbReference type="ChEBI" id="CHEBI:15378"/>
        <dbReference type="ChEBI" id="CHEBI:30616"/>
        <dbReference type="ChEBI" id="CHEBI:43474"/>
        <dbReference type="ChEBI" id="CHEBI:456216"/>
    </reaction>
</comment>
<comment type="subunit">
    <text evidence="3 4 6">Homohexamer. Interacts with TOR1A; the interaction may be specific of neural tissues. Interacts with TOR1AIP1; TOR1AIP1 is required for TOR1B location on the nuclear membrane. Interacts (ATP-bound) with TOR1AIP2; important for endoplasmic reticulum integrity.</text>
</comment>
<comment type="subcellular location">
    <subcellularLocation>
        <location evidence="3">Endoplasmic reticulum lumen</location>
    </subcellularLocation>
    <subcellularLocation>
        <location evidence="3">Nucleus membrane</location>
    </subcellularLocation>
</comment>
<comment type="tissue specificity">
    <text evidence="3">Widely expressed with low levels in brain.</text>
</comment>
<comment type="PTM">
    <text evidence="3">N-glycosylated.</text>
</comment>
<comment type="similarity">
    <text evidence="7">Belongs to the ClpA/ClpB family. Torsin subfamily.</text>
</comment>
<gene>
    <name type="primary">TOR1B</name>
    <name type="synonym">DQ1</name>
    <name type="ORF">FKSG18</name>
</gene>
<keyword id="KW-0067">ATP-binding</keyword>
<keyword id="KW-0143">Chaperone</keyword>
<keyword id="KW-0256">Endoplasmic reticulum</keyword>
<keyword id="KW-0325">Glycoprotein</keyword>
<keyword id="KW-0378">Hydrolase</keyword>
<keyword id="KW-0472">Membrane</keyword>
<keyword id="KW-0547">Nucleotide-binding</keyword>
<keyword id="KW-0539">Nucleus</keyword>
<keyword id="KW-1267">Proteomics identification</keyword>
<keyword id="KW-1185">Reference proteome</keyword>
<keyword id="KW-0732">Signal</keyword>
<organism>
    <name type="scientific">Homo sapiens</name>
    <name type="common">Human</name>
    <dbReference type="NCBI Taxonomy" id="9606"/>
    <lineage>
        <taxon>Eukaryota</taxon>
        <taxon>Metazoa</taxon>
        <taxon>Chordata</taxon>
        <taxon>Craniata</taxon>
        <taxon>Vertebrata</taxon>
        <taxon>Euteleostomi</taxon>
        <taxon>Mammalia</taxon>
        <taxon>Eutheria</taxon>
        <taxon>Euarchontoglires</taxon>
        <taxon>Primates</taxon>
        <taxon>Haplorrhini</taxon>
        <taxon>Catarrhini</taxon>
        <taxon>Hominidae</taxon>
        <taxon>Homo</taxon>
    </lineage>
</organism>
<sequence>MLRAGWLRGAAALALLLAARVVAAFEPITVGLAIGAASAITGYLSYNDIYCRFAECCREERPLNASALKLDLEEKLFGQHLATEVIFKALTGFRNNKNPKKPLTLSLHGWAGTGKNFVSQIVAENLHPKGLKSNFVHLFVSTLHFPHEQKIKLYQDQLQKWIRGNVSACANSVFIFDEMDKLHPGIIDAIKPFLDYYEQVDGVSYRKAIFIFLSNAGGDLITKTALDFWRAGRKREDIQLKDLEPVLSVGVFNNKHSGLWHSGLIDKNLIDYFIPFLPLEYRHVKMCVRAEMRARGSAIDEDIVTRVAEEMTFFPRDEKIYSDKGCKTVQSRLDFH</sequence>
<protein>
    <recommendedName>
        <fullName>Torsin-1B</fullName>
    </recommendedName>
    <alternativeName>
        <fullName>Torsin ATPase-1B</fullName>
        <ecNumber>3.6.4.-</ecNumber>
    </alternativeName>
    <alternativeName>
        <fullName>Torsin family 1 member B</fullName>
    </alternativeName>
</protein>
<evidence type="ECO:0000250" key="1"/>
<evidence type="ECO:0000255" key="2"/>
<evidence type="ECO:0000269" key="3">
    <source>
    </source>
</evidence>
<evidence type="ECO:0000269" key="4">
    <source>
    </source>
</evidence>
<evidence type="ECO:0000269" key="5">
    <source>
    </source>
</evidence>
<evidence type="ECO:0000269" key="6">
    <source>
    </source>
</evidence>
<evidence type="ECO:0000305" key="7"/>
<reference key="1">
    <citation type="submission" date="2000-10" db="EMBL/GenBank/DDBJ databases">
        <title>Cloning of FKSG18, a novel gene located on human chromosome 9.</title>
        <authorList>
            <person name="Wang Y.-G."/>
            <person name="Gong L."/>
        </authorList>
    </citation>
    <scope>NUCLEOTIDE SEQUENCE [MRNA]</scope>
</reference>
<reference key="2">
    <citation type="journal article" date="2004" name="Nature">
        <title>DNA sequence and analysis of human chromosome 9.</title>
        <authorList>
            <person name="Humphray S.J."/>
            <person name="Oliver K."/>
            <person name="Hunt A.R."/>
            <person name="Plumb R.W."/>
            <person name="Loveland J.E."/>
            <person name="Howe K.L."/>
            <person name="Andrews T.D."/>
            <person name="Searle S."/>
            <person name="Hunt S.E."/>
            <person name="Scott C.E."/>
            <person name="Jones M.C."/>
            <person name="Ainscough R."/>
            <person name="Almeida J.P."/>
            <person name="Ambrose K.D."/>
            <person name="Ashwell R.I.S."/>
            <person name="Babbage A.K."/>
            <person name="Babbage S."/>
            <person name="Bagguley C.L."/>
            <person name="Bailey J."/>
            <person name="Banerjee R."/>
            <person name="Barker D.J."/>
            <person name="Barlow K.F."/>
            <person name="Bates K."/>
            <person name="Beasley H."/>
            <person name="Beasley O."/>
            <person name="Bird C.P."/>
            <person name="Bray-Allen S."/>
            <person name="Brown A.J."/>
            <person name="Brown J.Y."/>
            <person name="Burford D."/>
            <person name="Burrill W."/>
            <person name="Burton J."/>
            <person name="Carder C."/>
            <person name="Carter N.P."/>
            <person name="Chapman J.C."/>
            <person name="Chen Y."/>
            <person name="Clarke G."/>
            <person name="Clark S.Y."/>
            <person name="Clee C.M."/>
            <person name="Clegg S."/>
            <person name="Collier R.E."/>
            <person name="Corby N."/>
            <person name="Crosier M."/>
            <person name="Cummings A.T."/>
            <person name="Davies J."/>
            <person name="Dhami P."/>
            <person name="Dunn M."/>
            <person name="Dutta I."/>
            <person name="Dyer L.W."/>
            <person name="Earthrowl M.E."/>
            <person name="Faulkner L."/>
            <person name="Fleming C.J."/>
            <person name="Frankish A."/>
            <person name="Frankland J.A."/>
            <person name="French L."/>
            <person name="Fricker D.G."/>
            <person name="Garner P."/>
            <person name="Garnett J."/>
            <person name="Ghori J."/>
            <person name="Gilbert J.G.R."/>
            <person name="Glison C."/>
            <person name="Grafham D.V."/>
            <person name="Gribble S."/>
            <person name="Griffiths C."/>
            <person name="Griffiths-Jones S."/>
            <person name="Grocock R."/>
            <person name="Guy J."/>
            <person name="Hall R.E."/>
            <person name="Hammond S."/>
            <person name="Harley J.L."/>
            <person name="Harrison E.S.I."/>
            <person name="Hart E.A."/>
            <person name="Heath P.D."/>
            <person name="Henderson C.D."/>
            <person name="Hopkins B.L."/>
            <person name="Howard P.J."/>
            <person name="Howden P.J."/>
            <person name="Huckle E."/>
            <person name="Johnson C."/>
            <person name="Johnson D."/>
            <person name="Joy A.A."/>
            <person name="Kay M."/>
            <person name="Keenan S."/>
            <person name="Kershaw J.K."/>
            <person name="Kimberley A.M."/>
            <person name="King A."/>
            <person name="Knights A."/>
            <person name="Laird G.K."/>
            <person name="Langford C."/>
            <person name="Lawlor S."/>
            <person name="Leongamornlert D.A."/>
            <person name="Leversha M."/>
            <person name="Lloyd C."/>
            <person name="Lloyd D.M."/>
            <person name="Lovell J."/>
            <person name="Martin S."/>
            <person name="Mashreghi-Mohammadi M."/>
            <person name="Matthews L."/>
            <person name="McLaren S."/>
            <person name="McLay K.E."/>
            <person name="McMurray A."/>
            <person name="Milne S."/>
            <person name="Nickerson T."/>
            <person name="Nisbett J."/>
            <person name="Nordsiek G."/>
            <person name="Pearce A.V."/>
            <person name="Peck A.I."/>
            <person name="Porter K.M."/>
            <person name="Pandian R."/>
            <person name="Pelan S."/>
            <person name="Phillimore B."/>
            <person name="Povey S."/>
            <person name="Ramsey Y."/>
            <person name="Rand V."/>
            <person name="Scharfe M."/>
            <person name="Sehra H.K."/>
            <person name="Shownkeen R."/>
            <person name="Sims S.K."/>
            <person name="Skuce C.D."/>
            <person name="Smith M."/>
            <person name="Steward C.A."/>
            <person name="Swarbreck D."/>
            <person name="Sycamore N."/>
            <person name="Tester J."/>
            <person name="Thorpe A."/>
            <person name="Tracey A."/>
            <person name="Tromans A."/>
            <person name="Thomas D.W."/>
            <person name="Wall M."/>
            <person name="Wallis J.M."/>
            <person name="West A.P."/>
            <person name="Whitehead S.L."/>
            <person name="Willey D.L."/>
            <person name="Williams S.A."/>
            <person name="Wilming L."/>
            <person name="Wray P.W."/>
            <person name="Young L."/>
            <person name="Ashurst J.L."/>
            <person name="Coulson A."/>
            <person name="Blocker H."/>
            <person name="Durbin R.M."/>
            <person name="Sulston J.E."/>
            <person name="Hubbard T."/>
            <person name="Jackson M.J."/>
            <person name="Bentley D.R."/>
            <person name="Beck S."/>
            <person name="Rogers J."/>
            <person name="Dunham I."/>
        </authorList>
    </citation>
    <scope>NUCLEOTIDE SEQUENCE [LARGE SCALE GENOMIC DNA]</scope>
</reference>
<reference key="3">
    <citation type="journal article" date="2004" name="Genome Res.">
        <title>The status, quality, and expansion of the NIH full-length cDNA project: the Mammalian Gene Collection (MGC).</title>
        <authorList>
            <consortium name="The MGC Project Team"/>
        </authorList>
    </citation>
    <scope>NUCLEOTIDE SEQUENCE [LARGE SCALE MRNA]</scope>
    <source>
        <tissue>Kidney</tissue>
    </source>
</reference>
<reference key="4">
    <citation type="journal article" date="1997" name="Nat. Genet.">
        <title>The early-onset torsion dystonia gene (DYT1) encodes an ATP-binding protein.</title>
        <authorList>
            <person name="Ozelius L.J."/>
            <person name="Hewett J.W."/>
            <person name="Page C.E."/>
            <person name="Bressman S.B."/>
            <person name="Kramer P.L."/>
            <person name="Shalish C."/>
            <person name="de Leon D."/>
            <person name="Brin M.F."/>
            <person name="Raymond D."/>
            <person name="Corey D.P."/>
            <person name="Fahn S."/>
            <person name="Risch N.J."/>
            <person name="Buckler A.J."/>
            <person name="Gusella J.F."/>
            <person name="Breakefield X.O."/>
        </authorList>
    </citation>
    <scope>NUCLEOTIDE SEQUENCE [MRNA] OF 71-336</scope>
    <source>
        <tissue>Brain cortex</tissue>
        <tissue>Fetal brain</tissue>
        <tissue>Liver</tissue>
    </source>
</reference>
<reference key="5">
    <citation type="journal article" date="2004" name="J. Neurochem.">
        <title>TorsinB--perinuclear location and association with torsinA.</title>
        <authorList>
            <person name="Hewett J.W."/>
            <person name="Kamm C."/>
            <person name="Boston H."/>
            <person name="Beauchamp R."/>
            <person name="Naismith T."/>
            <person name="Ozelius L."/>
            <person name="Hanson P.I."/>
            <person name="Breakefield X.O."/>
            <person name="Ramesh V."/>
        </authorList>
    </citation>
    <scope>INTERACTION WITH TOR1A</scope>
    <scope>TISSUE SPECIFICITY</scope>
    <scope>GLYCOSYLATION</scope>
    <scope>SUBCELLULAR LOCATION</scope>
</reference>
<reference key="6">
    <citation type="journal article" date="2010" name="Hum. Mol. Genet.">
        <title>Relative tissue expression of homologous torsinB correlates with the neuronal specific importance of DYT1 dystonia-associated torsinA.</title>
        <authorList>
            <person name="Jungwirth M."/>
            <person name="Dear M.L."/>
            <person name="Brown P."/>
            <person name="Holbrook K."/>
            <person name="Goodchild R."/>
        </authorList>
    </citation>
    <scope>SUBUNIT</scope>
    <scope>INTERACTION WITH TOR1A</scope>
    <scope>MUTAGENESIS OF GLU-178</scope>
</reference>
<reference key="7">
    <citation type="journal article" date="2011" name="BMC Syst. Biol.">
        <title>Initial characterization of the human central proteome.</title>
        <authorList>
            <person name="Burkard T.R."/>
            <person name="Planyavsky M."/>
            <person name="Kaupe I."/>
            <person name="Breitwieser F.P."/>
            <person name="Buerckstuemmer T."/>
            <person name="Bennett K.L."/>
            <person name="Superti-Furga G."/>
            <person name="Colinge J."/>
        </authorList>
    </citation>
    <scope>IDENTIFICATION BY MASS SPECTROMETRY [LARGE SCALE ANALYSIS]</scope>
</reference>
<reference key="8">
    <citation type="journal article" date="2013" name="Proc. Natl. Acad. Sci. U.S.A.">
        <title>Regulation of Torsin ATPases by LAP1 and LULL1.</title>
        <authorList>
            <person name="Zhao C."/>
            <person name="Brown R.S."/>
            <person name="Chase A.R."/>
            <person name="Eisele M.R."/>
            <person name="Schlieker C."/>
        </authorList>
    </citation>
    <scope>FUNCTION AS ATPASE</scope>
    <scope>CATALYTIC ACTIVITY</scope>
</reference>
<reference key="9">
    <citation type="journal article" date="2014" name="J. Biol. Chem.">
        <title>Arresting a Torsin ATPase reshapes the endoplasmic reticulum.</title>
        <authorList>
            <person name="Rose A.E."/>
            <person name="Zhao C."/>
            <person name="Turner E.M."/>
            <person name="Steyer A.M."/>
            <person name="Schlieker C."/>
        </authorList>
    </citation>
    <scope>FUNCTION IN ENDOPLASMIC RETICULUM INTEGRITY</scope>
    <scope>CATALYTIC ACTIVITY</scope>
    <scope>INTERACTION WITH TOR1AIP2</scope>
    <scope>MUTAGENESIS OF GLU-178; 334-ASP--HIS-336 AND PHE-335</scope>
</reference>
<accession>O14657</accession>
<name>TOR1B_HUMAN</name>
<feature type="signal peptide" evidence="2">
    <location>
        <begin position="1"/>
        <end position="24"/>
    </location>
</feature>
<feature type="chain" id="PRO_0000005509" description="Torsin-1B">
    <location>
        <begin position="25"/>
        <end position="336"/>
    </location>
</feature>
<feature type="binding site" evidence="2">
    <location>
        <begin position="109"/>
        <end position="116"/>
    </location>
    <ligand>
        <name>ATP</name>
        <dbReference type="ChEBI" id="CHEBI:30616"/>
    </ligand>
</feature>
<feature type="glycosylation site" description="N-linked (GlcNAc...) asparagine" evidence="2">
    <location>
        <position position="64"/>
    </location>
</feature>
<feature type="glycosylation site" description="N-linked (GlcNAc...) asparagine" evidence="1">
    <location>
        <position position="165"/>
    </location>
</feature>
<feature type="sequence variant" id="VAR_059220" description="In dbSNP:rs10988518.">
    <original>A</original>
    <variation>T</variation>
    <location>
        <position position="54"/>
    </location>
</feature>
<feature type="mutagenesis site" description="Loss of ATPase activity. Produces sinusoidal endoplasmic reticulum structures where it accumulates. Highly enhances interaction with TOR1AIP2. Localizes in the nuclear envelope." evidence="4 6">
    <original>E</original>
    <variation>Q</variation>
    <location>
        <position position="178"/>
    </location>
</feature>
<feature type="mutagenesis site" description="Highly reduces ATPase activity induced by TOR1AIP2." evidence="6">
    <original>DFH</original>
    <variation>GGG</variation>
    <location>
        <begin position="334"/>
        <end position="336"/>
    </location>
</feature>
<feature type="mutagenesis site" description="Decreases interaction with TOR1AIP2." evidence="6">
    <location>
        <begin position="334"/>
        <end position="336"/>
    </location>
</feature>
<feature type="mutagenesis site" description="No effect on interaction with TOR1AIP2." evidence="6">
    <original>F</original>
    <variation>A</variation>
    <location>
        <position position="335"/>
    </location>
</feature>